<proteinExistence type="evidence at protein level"/>
<feature type="chain" id="PRO_0000441686" description="Nuclear envelope-associated protein 1">
    <location>
        <begin position="1"/>
        <end position="336"/>
    </location>
</feature>
<feature type="transmembrane region" description="Helical" evidence="1">
    <location>
        <begin position="313"/>
        <end position="330"/>
    </location>
</feature>
<feature type="coiled-coil region" evidence="1">
    <location>
        <begin position="125"/>
        <end position="261"/>
    </location>
</feature>
<feature type="short sequence motif" description="Bipartite nuclear localization signal" evidence="5">
    <location>
        <begin position="240"/>
        <end position="261"/>
    </location>
</feature>
<feature type="sequence conflict" description="In Ref. 1; AAD09217." evidence="4" ref="1">
    <original>MSY</original>
    <variation>MAEFC</variation>
    <location>
        <begin position="1"/>
        <end position="3"/>
    </location>
</feature>
<feature type="sequence conflict" description="In Ref. 5; BAD94422." evidence="4" ref="5">
    <original>S</original>
    <variation>G</variation>
    <location>
        <position position="161"/>
    </location>
</feature>
<comment type="subunit">
    <text evidence="2">Forms heteromers with NEAP2 and NEAP3. Interacts with SUN1; SUN2 and bZIP18.</text>
</comment>
<comment type="subcellular location">
    <subcellularLocation>
        <location evidence="2">Nucleus inner membrane</location>
        <topology evidence="1">Single-pass membrane protein</topology>
    </subcellularLocation>
    <subcellularLocation>
        <location evidence="2">Nucleus</location>
        <location evidence="2">Nucleoplasm</location>
    </subcellularLocation>
    <text evidence="2">Colocalized with bZIP18 in the nucleoplasm.</text>
</comment>
<comment type="disruption phenotype">
    <text evidence="2">Double mutants NEAP1-NEAP3 display reduced primary root growth, and altered nuclear morphology and chromatin structure.</text>
</comment>
<dbReference type="EMBL" id="U72393">
    <property type="protein sequence ID" value="AAD09217.1"/>
    <property type="molecule type" value="mRNA"/>
</dbReference>
<dbReference type="EMBL" id="AC012393">
    <property type="protein sequence ID" value="AAF26085.1"/>
    <property type="molecule type" value="Genomic_DNA"/>
</dbReference>
<dbReference type="EMBL" id="CP002686">
    <property type="protein sequence ID" value="AEE74301.1"/>
    <property type="molecule type" value="Genomic_DNA"/>
</dbReference>
<dbReference type="EMBL" id="CP002686">
    <property type="protein sequence ID" value="ANM65895.1"/>
    <property type="molecule type" value="Genomic_DNA"/>
</dbReference>
<dbReference type="EMBL" id="AY084526">
    <property type="protein sequence ID" value="AAM61094.1"/>
    <property type="molecule type" value="mRNA"/>
</dbReference>
<dbReference type="EMBL" id="AK221425">
    <property type="protein sequence ID" value="BAD94422.1"/>
    <property type="molecule type" value="mRNA"/>
</dbReference>
<dbReference type="RefSeq" id="NP_001327832.1">
    <property type="nucleotide sequence ID" value="NM_001337615.1"/>
</dbReference>
<dbReference type="RefSeq" id="NP_566262.1">
    <property type="nucleotide sequence ID" value="NM_111457.2"/>
</dbReference>
<dbReference type="SMR" id="Q9M9L3"/>
<dbReference type="FunCoup" id="Q9M9L3">
    <property type="interactions" value="3"/>
</dbReference>
<dbReference type="STRING" id="3702.Q9M9L3"/>
<dbReference type="PaxDb" id="3702-AT3G05830.2"/>
<dbReference type="EnsemblPlants" id="AT3G05830.1">
    <property type="protein sequence ID" value="AT3G05830.1"/>
    <property type="gene ID" value="AT3G05830"/>
</dbReference>
<dbReference type="EnsemblPlants" id="AT3G05830.3">
    <property type="protein sequence ID" value="AT3G05830.3"/>
    <property type="gene ID" value="AT3G05830"/>
</dbReference>
<dbReference type="GeneID" id="819752"/>
<dbReference type="Gramene" id="AT3G05830.1">
    <property type="protein sequence ID" value="AT3G05830.1"/>
    <property type="gene ID" value="AT3G05830"/>
</dbReference>
<dbReference type="Gramene" id="AT3G05830.3">
    <property type="protein sequence ID" value="AT3G05830.3"/>
    <property type="gene ID" value="AT3G05830"/>
</dbReference>
<dbReference type="KEGG" id="ath:AT3G05830"/>
<dbReference type="Araport" id="AT3G05830"/>
<dbReference type="TAIR" id="AT3G05830">
    <property type="gene designation" value="ATNEAP1"/>
</dbReference>
<dbReference type="InParanoid" id="Q9M9L3"/>
<dbReference type="OMA" id="CDKQKLW"/>
<dbReference type="PhylomeDB" id="Q9M9L3"/>
<dbReference type="PRO" id="PR:Q9M9L3"/>
<dbReference type="Proteomes" id="UP000006548">
    <property type="component" value="Chromosome 3"/>
</dbReference>
<dbReference type="ExpressionAtlas" id="Q9M9L3">
    <property type="expression patterns" value="baseline and differential"/>
</dbReference>
<dbReference type="GO" id="GO:0005637">
    <property type="term" value="C:nuclear inner membrane"/>
    <property type="evidence" value="ECO:0007669"/>
    <property type="project" value="UniProtKB-SubCell"/>
</dbReference>
<dbReference type="GO" id="GO:0005654">
    <property type="term" value="C:nucleoplasm"/>
    <property type="evidence" value="ECO:0007669"/>
    <property type="project" value="UniProtKB-SubCell"/>
</dbReference>
<dbReference type="InterPro" id="IPR049932">
    <property type="entry name" value="NEAP1-4"/>
</dbReference>
<dbReference type="PANTHER" id="PTHR48145">
    <property type="entry name" value="NUCLEAR ENVELOPE-ASSOCIATED PROTEIN 1"/>
    <property type="match status" value="1"/>
</dbReference>
<dbReference type="PANTHER" id="PTHR48145:SF4">
    <property type="entry name" value="NUCLEAR ENVELOPE-ASSOCIATED PROTEIN 1"/>
    <property type="match status" value="1"/>
</dbReference>
<accession>Q9M9L3</accession>
<accession>Q56Y98</accession>
<accession>Q9ZRC5</accession>
<protein>
    <recommendedName>
        <fullName evidence="3">Nuclear envelope-associated protein 1</fullName>
        <shortName evidence="3">AtNEAP1</shortName>
    </recommendedName>
    <alternativeName>
        <fullName evidence="7">Plant IF-like protein</fullName>
    </alternativeName>
</protein>
<evidence type="ECO:0000255" key="1"/>
<evidence type="ECO:0000269" key="2">
    <source>
    </source>
</evidence>
<evidence type="ECO:0000303" key="3">
    <source>
    </source>
</evidence>
<evidence type="ECO:0000305" key="4"/>
<evidence type="ECO:0000305" key="5">
    <source>
    </source>
</evidence>
<evidence type="ECO:0000312" key="6">
    <source>
        <dbReference type="Araport" id="AT3G05830"/>
    </source>
</evidence>
<evidence type="ECO:0000312" key="7">
    <source>
        <dbReference type="EMBL" id="AAD09217.1"/>
    </source>
</evidence>
<evidence type="ECO:0000312" key="8">
    <source>
        <dbReference type="EMBL" id="AAF26085.1"/>
    </source>
</evidence>
<sequence length="336" mass="39578">MSYSEKTTVDPLLRDLDEKKESFRRNVVSLATELKQVRGRLVSQEQSFLKETITRKEAEKRGKNMEMEICKLQKRLEERNCQLEASASAADKFIKELEEFRLKLDTTKQTAEASADSAQSTKIQCSMLKQQLDDKTRSLREQEDRMTQLGHQLDDLQRGLSLRECSEKQLREEVRRIEREVTEAIAKAGIGGMDSELQKLLEDVSPMKFERMNRLVEVKDEEITKLKDEIRLMSGQWKHKTKELESQLEKQRRTDQDLKKKVLKLEFCLQEARSQTRKLQRKGERRDMEIKEIRDLISEKQNLNNESWDKQKFWDNSGFKIVVSMSMLMLVVVSKR</sequence>
<reference key="1">
    <citation type="submission" date="1996-09" db="EMBL/GenBank/DDBJ databases">
        <title>Arabidopsis thaliana intermediate filament-related plant cDNA clones isolated by IFA screening of a flower expression library.</title>
        <authorList>
            <person name="Colter M.E."/>
            <person name="Saunders M.J."/>
        </authorList>
    </citation>
    <scope>NUCLEOTIDE SEQUENCE [MRNA]</scope>
    <source>
        <strain>cv. Landsberg erecta</strain>
    </source>
</reference>
<reference key="2">
    <citation type="journal article" date="2000" name="Nature">
        <title>Sequence and analysis of chromosome 3 of the plant Arabidopsis thaliana.</title>
        <authorList>
            <person name="Salanoubat M."/>
            <person name="Lemcke K."/>
            <person name="Rieger M."/>
            <person name="Ansorge W."/>
            <person name="Unseld M."/>
            <person name="Fartmann B."/>
            <person name="Valle G."/>
            <person name="Bloecker H."/>
            <person name="Perez-Alonso M."/>
            <person name="Obermaier B."/>
            <person name="Delseny M."/>
            <person name="Boutry M."/>
            <person name="Grivell L.A."/>
            <person name="Mache R."/>
            <person name="Puigdomenech P."/>
            <person name="De Simone V."/>
            <person name="Choisne N."/>
            <person name="Artiguenave F."/>
            <person name="Robert C."/>
            <person name="Brottier P."/>
            <person name="Wincker P."/>
            <person name="Cattolico L."/>
            <person name="Weissenbach J."/>
            <person name="Saurin W."/>
            <person name="Quetier F."/>
            <person name="Schaefer M."/>
            <person name="Mueller-Auer S."/>
            <person name="Gabel C."/>
            <person name="Fuchs M."/>
            <person name="Benes V."/>
            <person name="Wurmbach E."/>
            <person name="Drzonek H."/>
            <person name="Erfle H."/>
            <person name="Jordan N."/>
            <person name="Bangert S."/>
            <person name="Wiedelmann R."/>
            <person name="Kranz H."/>
            <person name="Voss H."/>
            <person name="Holland R."/>
            <person name="Brandt P."/>
            <person name="Nyakatura G."/>
            <person name="Vezzi A."/>
            <person name="D'Angelo M."/>
            <person name="Pallavicini A."/>
            <person name="Toppo S."/>
            <person name="Simionati B."/>
            <person name="Conrad A."/>
            <person name="Hornischer K."/>
            <person name="Kauer G."/>
            <person name="Loehnert T.-H."/>
            <person name="Nordsiek G."/>
            <person name="Reichelt J."/>
            <person name="Scharfe M."/>
            <person name="Schoen O."/>
            <person name="Bargues M."/>
            <person name="Terol J."/>
            <person name="Climent J."/>
            <person name="Navarro P."/>
            <person name="Collado C."/>
            <person name="Perez-Perez A."/>
            <person name="Ottenwaelder B."/>
            <person name="Duchemin D."/>
            <person name="Cooke R."/>
            <person name="Laudie M."/>
            <person name="Berger-Llauro C."/>
            <person name="Purnelle B."/>
            <person name="Masuy D."/>
            <person name="de Haan M."/>
            <person name="Maarse A.C."/>
            <person name="Alcaraz J.-P."/>
            <person name="Cottet A."/>
            <person name="Casacuberta E."/>
            <person name="Monfort A."/>
            <person name="Argiriou A."/>
            <person name="Flores M."/>
            <person name="Liguori R."/>
            <person name="Vitale D."/>
            <person name="Mannhaupt G."/>
            <person name="Haase D."/>
            <person name="Schoof H."/>
            <person name="Rudd S."/>
            <person name="Zaccaria P."/>
            <person name="Mewes H.-W."/>
            <person name="Mayer K.F.X."/>
            <person name="Kaul S."/>
            <person name="Town C.D."/>
            <person name="Koo H.L."/>
            <person name="Tallon L.J."/>
            <person name="Jenkins J."/>
            <person name="Rooney T."/>
            <person name="Rizzo M."/>
            <person name="Walts A."/>
            <person name="Utterback T."/>
            <person name="Fujii C.Y."/>
            <person name="Shea T.P."/>
            <person name="Creasy T.H."/>
            <person name="Haas B."/>
            <person name="Maiti R."/>
            <person name="Wu D."/>
            <person name="Peterson J."/>
            <person name="Van Aken S."/>
            <person name="Pai G."/>
            <person name="Militscher J."/>
            <person name="Sellers P."/>
            <person name="Gill J.E."/>
            <person name="Feldblyum T.V."/>
            <person name="Preuss D."/>
            <person name="Lin X."/>
            <person name="Nierman W.C."/>
            <person name="Salzberg S.L."/>
            <person name="White O."/>
            <person name="Venter J.C."/>
            <person name="Fraser C.M."/>
            <person name="Kaneko T."/>
            <person name="Nakamura Y."/>
            <person name="Sato S."/>
            <person name="Kato T."/>
            <person name="Asamizu E."/>
            <person name="Sasamoto S."/>
            <person name="Kimura T."/>
            <person name="Idesawa K."/>
            <person name="Kawashima K."/>
            <person name="Kishida Y."/>
            <person name="Kiyokawa C."/>
            <person name="Kohara M."/>
            <person name="Matsumoto M."/>
            <person name="Matsuno A."/>
            <person name="Muraki A."/>
            <person name="Nakayama S."/>
            <person name="Nakazaki N."/>
            <person name="Shinpo S."/>
            <person name="Takeuchi C."/>
            <person name="Wada T."/>
            <person name="Watanabe A."/>
            <person name="Yamada M."/>
            <person name="Yasuda M."/>
            <person name="Tabata S."/>
        </authorList>
    </citation>
    <scope>NUCLEOTIDE SEQUENCE [LARGE SCALE GENOMIC DNA]</scope>
    <source>
        <strain>cv. Columbia</strain>
    </source>
</reference>
<reference key="3">
    <citation type="journal article" date="2017" name="Plant J.">
        <title>Araport11: a complete reannotation of the Arabidopsis thaliana reference genome.</title>
        <authorList>
            <person name="Cheng C.Y."/>
            <person name="Krishnakumar V."/>
            <person name="Chan A.P."/>
            <person name="Thibaud-Nissen F."/>
            <person name="Schobel S."/>
            <person name="Town C.D."/>
        </authorList>
    </citation>
    <scope>GENOME REANNOTATION</scope>
    <source>
        <strain>cv. Columbia</strain>
    </source>
</reference>
<reference key="4">
    <citation type="submission" date="2002-03" db="EMBL/GenBank/DDBJ databases">
        <title>Full-length cDNA from Arabidopsis thaliana.</title>
        <authorList>
            <person name="Brover V.V."/>
            <person name="Troukhan M.E."/>
            <person name="Alexandrov N.A."/>
            <person name="Lu Y.-P."/>
            <person name="Flavell R.B."/>
            <person name="Feldmann K.A."/>
        </authorList>
    </citation>
    <scope>NUCLEOTIDE SEQUENCE [LARGE SCALE MRNA]</scope>
</reference>
<reference key="5">
    <citation type="submission" date="2005-03" db="EMBL/GenBank/DDBJ databases">
        <title>Large-scale analysis of RIKEN Arabidopsis full-length (RAFL) cDNAs.</title>
        <authorList>
            <person name="Totoki Y."/>
            <person name="Seki M."/>
            <person name="Ishida J."/>
            <person name="Nakajima M."/>
            <person name="Enju A."/>
            <person name="Kamiya A."/>
            <person name="Narusaka M."/>
            <person name="Shin-i T."/>
            <person name="Nakagawa M."/>
            <person name="Sakamoto N."/>
            <person name="Oishi K."/>
            <person name="Kohara Y."/>
            <person name="Kobayashi M."/>
            <person name="Toyoda A."/>
            <person name="Sakaki Y."/>
            <person name="Sakurai T."/>
            <person name="Iida K."/>
            <person name="Akiyama K."/>
            <person name="Satou M."/>
            <person name="Toyoda T."/>
            <person name="Konagaya A."/>
            <person name="Carninci P."/>
            <person name="Kawai J."/>
            <person name="Hayashizaki Y."/>
            <person name="Shinozaki K."/>
        </authorList>
    </citation>
    <scope>NUCLEOTIDE SEQUENCE [LARGE SCALE MRNA] OF 1-195</scope>
    <source>
        <strain>cv. Columbia</strain>
    </source>
</reference>
<reference key="6">
    <citation type="journal article" date="2016" name="J. Exp. Bot.">
        <title>A novel family of plant nuclear envelope-associated proteins.</title>
        <authorList>
            <person name="Pawar V."/>
            <person name="Poulet A."/>
            <person name="Detourne G."/>
            <person name="Tatout C."/>
            <person name="Vanrobays E."/>
            <person name="Evans D.E."/>
            <person name="Graumann K."/>
        </authorList>
    </citation>
    <scope>GENE FAMILY</scope>
    <scope>NOMENCLATURE</scope>
    <scope>SUBCELLULAR LOCATION</scope>
    <scope>SUBUNIT</scope>
    <scope>INTERACTION WITH NEAP2; NEAP3; SUN1; SUN2 AND BZIP18</scope>
    <scope>DISRUPTION PHENOTYPE</scope>
</reference>
<keyword id="KW-0175">Coiled coil</keyword>
<keyword id="KW-0472">Membrane</keyword>
<keyword id="KW-0539">Nucleus</keyword>
<keyword id="KW-1185">Reference proteome</keyword>
<keyword id="KW-0812">Transmembrane</keyword>
<keyword id="KW-1133">Transmembrane helix</keyword>
<name>NEAP1_ARATH</name>
<gene>
    <name evidence="3" type="primary">NEAP1</name>
    <name evidence="6" type="ordered locus">At3g05830</name>
    <name evidence="8" type="ORF">F10A16.12</name>
</gene>
<organism>
    <name type="scientific">Arabidopsis thaliana</name>
    <name type="common">Mouse-ear cress</name>
    <dbReference type="NCBI Taxonomy" id="3702"/>
    <lineage>
        <taxon>Eukaryota</taxon>
        <taxon>Viridiplantae</taxon>
        <taxon>Streptophyta</taxon>
        <taxon>Embryophyta</taxon>
        <taxon>Tracheophyta</taxon>
        <taxon>Spermatophyta</taxon>
        <taxon>Magnoliopsida</taxon>
        <taxon>eudicotyledons</taxon>
        <taxon>Gunneridae</taxon>
        <taxon>Pentapetalae</taxon>
        <taxon>rosids</taxon>
        <taxon>malvids</taxon>
        <taxon>Brassicales</taxon>
        <taxon>Brassicaceae</taxon>
        <taxon>Camelineae</taxon>
        <taxon>Arabidopsis</taxon>
    </lineage>
</organism>